<name>A1A1A_DANRE</name>
<comment type="function">
    <text evidence="2 3 4">Catalyzes the NADPH-dependent reduction of a wide variety of carbonyl-containing compounds to their corresponding alcohols. Displays enzymatic activity towards endogenous metabolites such as aromatic and aliphatic aldehydes, ketones, monosaccharides and bile acids. Acts as an aldehyde-detoxification enzyme (By similarity). Also acts as an inhibitor of protein S-nitrosylation by mediating degradation of S-nitroso-coenzyme A (S-nitroso-CoA), a cofactor required to S-nitrosylate proteins (By similarity). Also acts as a S-nitroso-glutathione reductase by catalyzing the NADPH-dependent reduction of S-nitrosoglutathione (By similarity). Displays no reductase activity towards retinoids (By similarity).</text>
</comment>
<comment type="catalytic activity">
    <reaction evidence="2">
        <text>a primary alcohol + NADP(+) = an aldehyde + NADPH + H(+)</text>
        <dbReference type="Rhea" id="RHEA:15937"/>
        <dbReference type="ChEBI" id="CHEBI:15378"/>
        <dbReference type="ChEBI" id="CHEBI:15734"/>
        <dbReference type="ChEBI" id="CHEBI:17478"/>
        <dbReference type="ChEBI" id="CHEBI:57783"/>
        <dbReference type="ChEBI" id="CHEBI:58349"/>
        <dbReference type="EC" id="1.1.1.2"/>
    </reaction>
</comment>
<comment type="catalytic activity">
    <reaction evidence="2">
        <text>S-nitroso-CoA + NADPH + H(+) = sulfinamide-CoA + NADP(+)</text>
        <dbReference type="Rhea" id="RHEA:78375"/>
        <dbReference type="ChEBI" id="CHEBI:15378"/>
        <dbReference type="ChEBI" id="CHEBI:57783"/>
        <dbReference type="ChEBI" id="CHEBI:58349"/>
        <dbReference type="ChEBI" id="CHEBI:145546"/>
        <dbReference type="ChEBI" id="CHEBI:145548"/>
    </reaction>
    <physiologicalReaction direction="left-to-right" evidence="2">
        <dbReference type="Rhea" id="RHEA:78376"/>
    </physiologicalReaction>
</comment>
<comment type="catalytic activity">
    <reaction evidence="5">
        <text>S-nitrosoglutathione + NADPH + H(+) = S-(hydroxysulfenamide)glutathione + NADP(+)</text>
        <dbReference type="Rhea" id="RHEA:63500"/>
        <dbReference type="ChEBI" id="CHEBI:15378"/>
        <dbReference type="ChEBI" id="CHEBI:57783"/>
        <dbReference type="ChEBI" id="CHEBI:58349"/>
        <dbReference type="ChEBI" id="CHEBI:145544"/>
        <dbReference type="ChEBI" id="CHEBI:229723"/>
    </reaction>
</comment>
<comment type="subcellular location">
    <subcellularLocation>
        <location evidence="5">Cytoplasm</location>
        <location evidence="5">Cytosol</location>
    </subcellularLocation>
    <subcellularLocation>
        <location evidence="5">Apical cell membrane</location>
    </subcellularLocation>
</comment>
<comment type="similarity">
    <text evidence="6">Belongs to the aldo/keto reductase family.</text>
</comment>
<proteinExistence type="evidence at transcript level"/>
<reference key="1">
    <citation type="journal article" date="2013" name="Nature">
        <title>The zebrafish reference genome sequence and its relationship to the human genome.</title>
        <authorList>
            <person name="Howe K."/>
            <person name="Clark M.D."/>
            <person name="Torroja C.F."/>
            <person name="Torrance J."/>
            <person name="Berthelot C."/>
            <person name="Muffato M."/>
            <person name="Collins J.E."/>
            <person name="Humphray S."/>
            <person name="McLaren K."/>
            <person name="Matthews L."/>
            <person name="McLaren S."/>
            <person name="Sealy I."/>
            <person name="Caccamo M."/>
            <person name="Churcher C."/>
            <person name="Scott C."/>
            <person name="Barrett J.C."/>
            <person name="Koch R."/>
            <person name="Rauch G.J."/>
            <person name="White S."/>
            <person name="Chow W."/>
            <person name="Kilian B."/>
            <person name="Quintais L.T."/>
            <person name="Guerra-Assuncao J.A."/>
            <person name="Zhou Y."/>
            <person name="Gu Y."/>
            <person name="Yen J."/>
            <person name="Vogel J.H."/>
            <person name="Eyre T."/>
            <person name="Redmond S."/>
            <person name="Banerjee R."/>
            <person name="Chi J."/>
            <person name="Fu B."/>
            <person name="Langley E."/>
            <person name="Maguire S.F."/>
            <person name="Laird G.K."/>
            <person name="Lloyd D."/>
            <person name="Kenyon E."/>
            <person name="Donaldson S."/>
            <person name="Sehra H."/>
            <person name="Almeida-King J."/>
            <person name="Loveland J."/>
            <person name="Trevanion S."/>
            <person name="Jones M."/>
            <person name="Quail M."/>
            <person name="Willey D."/>
            <person name="Hunt A."/>
            <person name="Burton J."/>
            <person name="Sims S."/>
            <person name="McLay K."/>
            <person name="Plumb B."/>
            <person name="Davis J."/>
            <person name="Clee C."/>
            <person name="Oliver K."/>
            <person name="Clark R."/>
            <person name="Riddle C."/>
            <person name="Elliot D."/>
            <person name="Threadgold G."/>
            <person name="Harden G."/>
            <person name="Ware D."/>
            <person name="Begum S."/>
            <person name="Mortimore B."/>
            <person name="Kerry G."/>
            <person name="Heath P."/>
            <person name="Phillimore B."/>
            <person name="Tracey A."/>
            <person name="Corby N."/>
            <person name="Dunn M."/>
            <person name="Johnson C."/>
            <person name="Wood J."/>
            <person name="Clark S."/>
            <person name="Pelan S."/>
            <person name="Griffiths G."/>
            <person name="Smith M."/>
            <person name="Glithero R."/>
            <person name="Howden P."/>
            <person name="Barker N."/>
            <person name="Lloyd C."/>
            <person name="Stevens C."/>
            <person name="Harley J."/>
            <person name="Holt K."/>
            <person name="Panagiotidis G."/>
            <person name="Lovell J."/>
            <person name="Beasley H."/>
            <person name="Henderson C."/>
            <person name="Gordon D."/>
            <person name="Auger K."/>
            <person name="Wright D."/>
            <person name="Collins J."/>
            <person name="Raisen C."/>
            <person name="Dyer L."/>
            <person name="Leung K."/>
            <person name="Robertson L."/>
            <person name="Ambridge K."/>
            <person name="Leongamornlert D."/>
            <person name="McGuire S."/>
            <person name="Gilderthorp R."/>
            <person name="Griffiths C."/>
            <person name="Manthravadi D."/>
            <person name="Nichol S."/>
            <person name="Barker G."/>
            <person name="Whitehead S."/>
            <person name="Kay M."/>
            <person name="Brown J."/>
            <person name="Murnane C."/>
            <person name="Gray E."/>
            <person name="Humphries M."/>
            <person name="Sycamore N."/>
            <person name="Barker D."/>
            <person name="Saunders D."/>
            <person name="Wallis J."/>
            <person name="Babbage A."/>
            <person name="Hammond S."/>
            <person name="Mashreghi-Mohammadi M."/>
            <person name="Barr L."/>
            <person name="Martin S."/>
            <person name="Wray P."/>
            <person name="Ellington A."/>
            <person name="Matthews N."/>
            <person name="Ellwood M."/>
            <person name="Woodmansey R."/>
            <person name="Clark G."/>
            <person name="Cooper J."/>
            <person name="Tromans A."/>
            <person name="Grafham D."/>
            <person name="Skuce C."/>
            <person name="Pandian R."/>
            <person name="Andrews R."/>
            <person name="Harrison E."/>
            <person name="Kimberley A."/>
            <person name="Garnett J."/>
            <person name="Fosker N."/>
            <person name="Hall R."/>
            <person name="Garner P."/>
            <person name="Kelly D."/>
            <person name="Bird C."/>
            <person name="Palmer S."/>
            <person name="Gehring I."/>
            <person name="Berger A."/>
            <person name="Dooley C.M."/>
            <person name="Ersan-Urun Z."/>
            <person name="Eser C."/>
            <person name="Geiger H."/>
            <person name="Geisler M."/>
            <person name="Karotki L."/>
            <person name="Kirn A."/>
            <person name="Konantz J."/>
            <person name="Konantz M."/>
            <person name="Oberlander M."/>
            <person name="Rudolph-Geiger S."/>
            <person name="Teucke M."/>
            <person name="Lanz C."/>
            <person name="Raddatz G."/>
            <person name="Osoegawa K."/>
            <person name="Zhu B."/>
            <person name="Rapp A."/>
            <person name="Widaa S."/>
            <person name="Langford C."/>
            <person name="Yang F."/>
            <person name="Schuster S.C."/>
            <person name="Carter N.P."/>
            <person name="Harrow J."/>
            <person name="Ning Z."/>
            <person name="Herrero J."/>
            <person name="Searle S.M."/>
            <person name="Enright A."/>
            <person name="Geisler R."/>
            <person name="Plasterk R.H."/>
            <person name="Lee C."/>
            <person name="Westerfield M."/>
            <person name="de Jong P.J."/>
            <person name="Zon L.I."/>
            <person name="Postlethwait J.H."/>
            <person name="Nusslein-Volhard C."/>
            <person name="Hubbard T.J."/>
            <person name="Roest Crollius H."/>
            <person name="Rogers J."/>
            <person name="Stemple D.L."/>
        </authorList>
    </citation>
    <scope>NUCLEOTIDE SEQUENCE [LARGE SCALE GENOMIC DNA]</scope>
    <source>
        <strain>Tuebingen</strain>
    </source>
</reference>
<reference key="2">
    <citation type="submission" date="2004-07" db="EMBL/GenBank/DDBJ databases">
        <authorList>
            <consortium name="NIH - Zebrafish Gene Collection (ZGC) project"/>
        </authorList>
    </citation>
    <scope>NUCLEOTIDE SEQUENCE [LARGE SCALE MRNA]</scope>
    <source>
        <tissue>Embryo</tissue>
    </source>
</reference>
<accession>Q6AZW2</accession>
<accession>A2CE54</accession>
<protein>
    <recommendedName>
        <fullName>Aldo-keto reductase family 1 member A1-A</fullName>
    </recommendedName>
    <alternativeName>
        <fullName>Alcohol dehydrogenase [NADP(+)] A</fullName>
        <ecNumber evidence="2">1.1.1.2</ecNumber>
    </alternativeName>
    <alternativeName>
        <fullName>Aldehyde reductase-A</fullName>
    </alternativeName>
    <alternativeName>
        <fullName evidence="6">S-nitroso-CoA reductase</fullName>
        <shortName evidence="6">ScorR</shortName>
        <ecNumber evidence="2">1.6.-.-</ecNumber>
    </alternativeName>
</protein>
<organism>
    <name type="scientific">Danio rerio</name>
    <name type="common">Zebrafish</name>
    <name type="synonym">Brachydanio rerio</name>
    <dbReference type="NCBI Taxonomy" id="7955"/>
    <lineage>
        <taxon>Eukaryota</taxon>
        <taxon>Metazoa</taxon>
        <taxon>Chordata</taxon>
        <taxon>Craniata</taxon>
        <taxon>Vertebrata</taxon>
        <taxon>Euteleostomi</taxon>
        <taxon>Actinopterygii</taxon>
        <taxon>Neopterygii</taxon>
        <taxon>Teleostei</taxon>
        <taxon>Ostariophysi</taxon>
        <taxon>Cypriniformes</taxon>
        <taxon>Danionidae</taxon>
        <taxon>Danioninae</taxon>
        <taxon>Danio</taxon>
    </lineage>
</organism>
<dbReference type="EC" id="1.1.1.2" evidence="2"/>
<dbReference type="EC" id="1.6.-.-" evidence="2"/>
<dbReference type="EMBL" id="CR318632">
    <property type="protein sequence ID" value="CAM13142.1"/>
    <property type="molecule type" value="Genomic_DNA"/>
</dbReference>
<dbReference type="EMBL" id="CR753867">
    <property type="protein sequence ID" value="CAM13142.1"/>
    <property type="status" value="JOINED"/>
    <property type="molecule type" value="Genomic_DNA"/>
</dbReference>
<dbReference type="EMBL" id="CR753867">
    <property type="protein sequence ID" value="CAN88791.1"/>
    <property type="molecule type" value="Genomic_DNA"/>
</dbReference>
<dbReference type="EMBL" id="CR318632">
    <property type="protein sequence ID" value="CAN88791.1"/>
    <property type="status" value="JOINED"/>
    <property type="molecule type" value="Genomic_DNA"/>
</dbReference>
<dbReference type="EMBL" id="BC077140">
    <property type="protein sequence ID" value="AAH77140.1"/>
    <property type="molecule type" value="mRNA"/>
</dbReference>
<dbReference type="RefSeq" id="NP_001003783.1">
    <property type="nucleotide sequence ID" value="NM_001003783.2"/>
</dbReference>
<dbReference type="SMR" id="Q6AZW2"/>
<dbReference type="FunCoup" id="Q6AZW2">
    <property type="interactions" value="939"/>
</dbReference>
<dbReference type="STRING" id="7955.ENSDARP00000051081"/>
<dbReference type="PaxDb" id="7955-ENSDARP00000051081"/>
<dbReference type="Ensembl" id="ENSDART00000051082">
    <property type="protein sequence ID" value="ENSDARP00000051081"/>
    <property type="gene ID" value="ENSDARG00000035257"/>
</dbReference>
<dbReference type="GeneID" id="445326"/>
<dbReference type="KEGG" id="dre:445326"/>
<dbReference type="AGR" id="ZFIN:ZDB-GENE-040808-44"/>
<dbReference type="CTD" id="445326"/>
<dbReference type="ZFIN" id="ZDB-GENE-040808-44">
    <property type="gene designation" value="akr1a1a"/>
</dbReference>
<dbReference type="eggNOG" id="KOG1577">
    <property type="taxonomic scope" value="Eukaryota"/>
</dbReference>
<dbReference type="InParanoid" id="Q6AZW2"/>
<dbReference type="OMA" id="FMTMKAA"/>
<dbReference type="OrthoDB" id="416253at2759"/>
<dbReference type="PhylomeDB" id="Q6AZW2"/>
<dbReference type="TreeFam" id="TF106492"/>
<dbReference type="PRO" id="PR:Q6AZW2"/>
<dbReference type="Proteomes" id="UP000000437">
    <property type="component" value="Alternate scaffold 5"/>
</dbReference>
<dbReference type="Proteomes" id="UP000000437">
    <property type="component" value="Chromosome 5"/>
</dbReference>
<dbReference type="Bgee" id="ENSDARG00000035257">
    <property type="expression patterns" value="Expressed in intestine and 12 other cell types or tissues"/>
</dbReference>
<dbReference type="GO" id="GO:0016324">
    <property type="term" value="C:apical plasma membrane"/>
    <property type="evidence" value="ECO:0000250"/>
    <property type="project" value="UniProtKB"/>
</dbReference>
<dbReference type="GO" id="GO:0005829">
    <property type="term" value="C:cytosol"/>
    <property type="evidence" value="ECO:0000250"/>
    <property type="project" value="UniProtKB"/>
</dbReference>
<dbReference type="GO" id="GO:0004032">
    <property type="term" value="F:aldose reductase (NADPH) activity"/>
    <property type="evidence" value="ECO:0000318"/>
    <property type="project" value="GO_Central"/>
</dbReference>
<dbReference type="GO" id="GO:0160163">
    <property type="term" value="F:S-nitrosoglutathione reductase (NADPH) activity"/>
    <property type="evidence" value="ECO:0007669"/>
    <property type="project" value="RHEA"/>
</dbReference>
<dbReference type="GO" id="GO:0046185">
    <property type="term" value="P:aldehyde catabolic process"/>
    <property type="evidence" value="ECO:0007669"/>
    <property type="project" value="InterPro"/>
</dbReference>
<dbReference type="GO" id="GO:0110095">
    <property type="term" value="P:cellular detoxification of aldehyde"/>
    <property type="evidence" value="ECO:0000250"/>
    <property type="project" value="UniProtKB"/>
</dbReference>
<dbReference type="GO" id="GO:0042593">
    <property type="term" value="P:glucose homeostasis"/>
    <property type="evidence" value="ECO:0000315"/>
    <property type="project" value="ZFIN"/>
</dbReference>
<dbReference type="GO" id="GO:0002040">
    <property type="term" value="P:sprouting angiogenesis"/>
    <property type="evidence" value="ECO:0000315"/>
    <property type="project" value="ZFIN"/>
</dbReference>
<dbReference type="CDD" id="cd19106">
    <property type="entry name" value="AKR_AKR1A1-4"/>
    <property type="match status" value="1"/>
</dbReference>
<dbReference type="FunFam" id="3.20.20.100:FF:000006">
    <property type="entry name" value="Aldo-keto reductase family 1 member A1"/>
    <property type="match status" value="1"/>
</dbReference>
<dbReference type="Gene3D" id="3.20.20.100">
    <property type="entry name" value="NADP-dependent oxidoreductase domain"/>
    <property type="match status" value="1"/>
</dbReference>
<dbReference type="InterPro" id="IPR020471">
    <property type="entry name" value="AKR"/>
</dbReference>
<dbReference type="InterPro" id="IPR044481">
    <property type="entry name" value="AKR1A"/>
</dbReference>
<dbReference type="InterPro" id="IPR018170">
    <property type="entry name" value="Aldo/ket_reductase_CS"/>
</dbReference>
<dbReference type="InterPro" id="IPR023210">
    <property type="entry name" value="NADP_OxRdtase_dom"/>
</dbReference>
<dbReference type="InterPro" id="IPR036812">
    <property type="entry name" value="NADP_OxRdtase_dom_sf"/>
</dbReference>
<dbReference type="PANTHER" id="PTHR11732">
    <property type="entry name" value="ALDO/KETO REDUCTASE"/>
    <property type="match status" value="1"/>
</dbReference>
<dbReference type="Pfam" id="PF00248">
    <property type="entry name" value="Aldo_ket_red"/>
    <property type="match status" value="1"/>
</dbReference>
<dbReference type="PIRSF" id="PIRSF000097">
    <property type="entry name" value="AKR"/>
    <property type="match status" value="1"/>
</dbReference>
<dbReference type="PRINTS" id="PR00069">
    <property type="entry name" value="ALDKETRDTASE"/>
</dbReference>
<dbReference type="SUPFAM" id="SSF51430">
    <property type="entry name" value="NAD(P)-linked oxidoreductase"/>
    <property type="match status" value="1"/>
</dbReference>
<dbReference type="PROSITE" id="PS00798">
    <property type="entry name" value="ALDOKETO_REDUCTASE_1"/>
    <property type="match status" value="1"/>
</dbReference>
<dbReference type="PROSITE" id="PS00062">
    <property type="entry name" value="ALDOKETO_REDUCTASE_2"/>
    <property type="match status" value="1"/>
</dbReference>
<dbReference type="PROSITE" id="PS00063">
    <property type="entry name" value="ALDOKETO_REDUCTASE_3"/>
    <property type="match status" value="1"/>
</dbReference>
<gene>
    <name type="primary">akr1a1a</name>
    <name type="ORF">si:ch211-113n10.1</name>
    <name type="ORF">zgc:100940</name>
</gene>
<sequence>MTATITLSTGQRMPTVGLGTWKSAPGQVKQAVLAALDCGYRHIDCAAAYSNEREVGEALTERLGPGKSLRRDDIFVTSKLWNTKHHPDDVEEACRRSLSDLRLSYLDLYLIHWPMAFGRGDELIPRHPDGTIQYDDTHYRDTWAAMEKLVDQGLAKAIGLSNFNAKQIDDILSIAKHKPVVNQVECHPYLVQAELVSHCWSRNLTVTAYSPLGSPDRPWVTPGEALLLDDPRVVGIAKSYNKTPAQVIIRWHIQRGVVCIPKSVTPSRIKQNIEVFDFKLSDEDMRLIESFNRNERFIIPTVIKDGQKIWRDAKHPHFPFIEPY</sequence>
<feature type="chain" id="PRO_0000384152" description="Aldo-keto reductase family 1 member A1-A">
    <location>
        <begin position="1"/>
        <end position="324"/>
    </location>
</feature>
<feature type="active site" description="Proton donor" evidence="2">
    <location>
        <position position="49"/>
    </location>
</feature>
<feature type="binding site" evidence="1">
    <location>
        <begin position="10"/>
        <end position="19"/>
    </location>
    <ligand>
        <name>NADP(+)</name>
        <dbReference type="ChEBI" id="CHEBI:58349"/>
    </ligand>
</feature>
<feature type="binding site" evidence="3">
    <location>
        <position position="20"/>
    </location>
    <ligand>
        <name>NADP(+)</name>
        <dbReference type="ChEBI" id="CHEBI:58349"/>
    </ligand>
</feature>
<feature type="binding site" evidence="3">
    <location>
        <position position="21"/>
    </location>
    <ligand>
        <name>NADP(+)</name>
        <dbReference type="ChEBI" id="CHEBI:58349"/>
    </ligand>
</feature>
<feature type="binding site" evidence="3">
    <location>
        <position position="44"/>
    </location>
    <ligand>
        <name>NADP(+)</name>
        <dbReference type="ChEBI" id="CHEBI:58349"/>
    </ligand>
</feature>
<feature type="binding site" evidence="3">
    <location>
        <position position="161"/>
    </location>
    <ligand>
        <name>NADP(+)</name>
        <dbReference type="ChEBI" id="CHEBI:58349"/>
    </ligand>
</feature>
<feature type="binding site" evidence="3">
    <location>
        <position position="162"/>
    </location>
    <ligand>
        <name>NADP(+)</name>
        <dbReference type="ChEBI" id="CHEBI:58349"/>
    </ligand>
</feature>
<feature type="binding site" evidence="3">
    <location>
        <position position="210"/>
    </location>
    <ligand>
        <name>NADP(+)</name>
        <dbReference type="ChEBI" id="CHEBI:58349"/>
    </ligand>
</feature>
<feature type="binding site" evidence="3">
    <location>
        <position position="212"/>
    </location>
    <ligand>
        <name>NADP(+)</name>
        <dbReference type="ChEBI" id="CHEBI:58349"/>
    </ligand>
</feature>
<feature type="binding site" evidence="3">
    <location>
        <position position="214"/>
    </location>
    <ligand>
        <name>NADP(+)</name>
        <dbReference type="ChEBI" id="CHEBI:58349"/>
    </ligand>
</feature>
<feature type="binding site" evidence="3">
    <location>
        <position position="262"/>
    </location>
    <ligand>
        <name>NADP(+)</name>
        <dbReference type="ChEBI" id="CHEBI:58349"/>
    </ligand>
</feature>
<feature type="binding site" evidence="3">
    <location>
        <position position="263"/>
    </location>
    <ligand>
        <name>NADP(+)</name>
        <dbReference type="ChEBI" id="CHEBI:58349"/>
    </ligand>
</feature>
<feature type="binding site" evidence="3">
    <location>
        <position position="264"/>
    </location>
    <ligand>
        <name>NADP(+)</name>
        <dbReference type="ChEBI" id="CHEBI:58349"/>
    </ligand>
</feature>
<feature type="binding site" evidence="3">
    <location>
        <position position="265"/>
    </location>
    <ligand>
        <name>NADP(+)</name>
        <dbReference type="ChEBI" id="CHEBI:58349"/>
    </ligand>
</feature>
<feature type="binding site" evidence="3">
    <location>
        <position position="268"/>
    </location>
    <ligand>
        <name>NADP(+)</name>
        <dbReference type="ChEBI" id="CHEBI:58349"/>
    </ligand>
</feature>
<feature type="binding site" evidence="3">
    <location>
        <position position="271"/>
    </location>
    <ligand>
        <name>NADP(+)</name>
        <dbReference type="ChEBI" id="CHEBI:58349"/>
    </ligand>
</feature>
<feature type="binding site" evidence="3">
    <location>
        <position position="272"/>
    </location>
    <ligand>
        <name>NADP(+)</name>
        <dbReference type="ChEBI" id="CHEBI:58349"/>
    </ligand>
</feature>
<feature type="site" description="Lowers pKa of active site Tyr" evidence="2">
    <location>
        <position position="79"/>
    </location>
</feature>
<feature type="sequence conflict" description="In Ref. 2; AAH77140." evidence="6" ref="2">
    <original>V</original>
    <variation>A</variation>
    <location>
        <position position="196"/>
    </location>
</feature>
<feature type="sequence conflict" description="In Ref. 2; AAH77140." evidence="6" ref="2">
    <original>I</original>
    <variation>V</variation>
    <location>
        <position position="309"/>
    </location>
</feature>
<feature type="sequence conflict" description="In Ref. 2; AAH77140." evidence="6" ref="2">
    <original>K</original>
    <variation>N</variation>
    <location>
        <position position="314"/>
    </location>
</feature>
<evidence type="ECO:0000250" key="1">
    <source>
        <dbReference type="UniProtKB" id="O60218"/>
    </source>
</evidence>
<evidence type="ECO:0000250" key="2">
    <source>
        <dbReference type="UniProtKB" id="P14550"/>
    </source>
</evidence>
<evidence type="ECO:0000250" key="3">
    <source>
        <dbReference type="UniProtKB" id="P50578"/>
    </source>
</evidence>
<evidence type="ECO:0000250" key="4">
    <source>
        <dbReference type="UniProtKB" id="P51635"/>
    </source>
</evidence>
<evidence type="ECO:0000250" key="5">
    <source>
        <dbReference type="UniProtKB" id="Q9JII6"/>
    </source>
</evidence>
<evidence type="ECO:0000305" key="6"/>
<keyword id="KW-1003">Cell membrane</keyword>
<keyword id="KW-0963">Cytoplasm</keyword>
<keyword id="KW-0472">Membrane</keyword>
<keyword id="KW-0521">NADP</keyword>
<keyword id="KW-0560">Oxidoreductase</keyword>
<keyword id="KW-1185">Reference proteome</keyword>